<reference key="1">
    <citation type="journal article" date="2001" name="Mol. Microbiol.">
        <title>Environmental control of invasin expression in Yersinia pseudotuberculosis is mediated by regulation of RovA, a transcriptional activator of the SlyA/Hor family.</title>
        <authorList>
            <person name="Nagel G."/>
            <person name="Lahrz A."/>
            <person name="Dersch P."/>
        </authorList>
    </citation>
    <scope>NUCLEOTIDE SEQUENCE [GENOMIC DNA]</scope>
    <scope>FUNCTION</scope>
    <scope>INDUCTION</scope>
</reference>
<reference key="2">
    <citation type="journal article" date="2004" name="Proc. Natl. Acad. Sci. U.S.A.">
        <title>Insights into the evolution of Yersinia pestis through whole-genome comparison with Yersinia pseudotuberculosis.</title>
        <authorList>
            <person name="Chain P.S.G."/>
            <person name="Carniel E."/>
            <person name="Larimer F.W."/>
            <person name="Lamerdin J."/>
            <person name="Stoutland P.O."/>
            <person name="Regala W.M."/>
            <person name="Georgescu A.M."/>
            <person name="Vergez L.M."/>
            <person name="Land M.L."/>
            <person name="Motin V.L."/>
            <person name="Brubaker R.R."/>
            <person name="Fowler J."/>
            <person name="Hinnebusch J."/>
            <person name="Marceau M."/>
            <person name="Medigue C."/>
            <person name="Simonet M."/>
            <person name="Chenal-Francisque V."/>
            <person name="Souza B."/>
            <person name="Dacheux D."/>
            <person name="Elliott J.M."/>
            <person name="Derbise A."/>
            <person name="Hauser L.J."/>
            <person name="Garcia E."/>
        </authorList>
    </citation>
    <scope>NUCLEOTIDE SEQUENCE [LARGE SCALE GENOMIC DNA]</scope>
    <source>
        <strain>IP32953</strain>
    </source>
</reference>
<keyword id="KW-0010">Activator</keyword>
<keyword id="KW-0238">DNA-binding</keyword>
<keyword id="KW-0678">Repressor</keyword>
<keyword id="KW-0804">Transcription</keyword>
<keyword id="KW-0805">Transcription regulation</keyword>
<keyword id="KW-0843">Virulence</keyword>
<name>SLYA_YERPS</name>
<organism>
    <name type="scientific">Yersinia pseudotuberculosis serotype I (strain IP32953)</name>
    <dbReference type="NCBI Taxonomy" id="273123"/>
    <lineage>
        <taxon>Bacteria</taxon>
        <taxon>Pseudomonadati</taxon>
        <taxon>Pseudomonadota</taxon>
        <taxon>Gammaproteobacteria</taxon>
        <taxon>Enterobacterales</taxon>
        <taxon>Yersiniaceae</taxon>
        <taxon>Yersinia</taxon>
    </lineage>
</organism>
<sequence>MESTLGSDLARLVRVWRALIDHRLKPLELTQTHWVTLYNINRLPPEQSQIQLAKAIGIEQPSLVRTLDQLEEKGLITRHTCANDRRAKRIKLTEQSSPIIEQVDGVICSTRKEILGGISSDEIAVLSGLIDKLEKNIIQLQTK</sequence>
<gene>
    <name evidence="1" type="primary">slyA</name>
    <name type="synonym">rovA</name>
    <name type="ordered locus">YPTB2288</name>
</gene>
<comment type="function">
    <text evidence="1 2">Transcription regulator that can specifically activate or repress expression of target genes. Required for expression of the virulence gene inv.</text>
</comment>
<comment type="subunit">
    <text evidence="1">Homodimer.</text>
</comment>
<comment type="induction">
    <text evidence="2">Autoregulated.</text>
</comment>
<comment type="similarity">
    <text evidence="1">Belongs to the SlyA family.</text>
</comment>
<feature type="chain" id="PRO_0000054399" description="Transcriptional regulator SlyA">
    <location>
        <begin position="1"/>
        <end position="143"/>
    </location>
</feature>
<feature type="domain" description="HTH marR-type" evidence="1">
    <location>
        <begin position="2"/>
        <end position="135"/>
    </location>
</feature>
<feature type="DNA-binding region" description="H-T-H motif" evidence="1">
    <location>
        <begin position="49"/>
        <end position="72"/>
    </location>
</feature>
<dbReference type="EMBL" id="AF330139">
    <property type="protein sequence ID" value="AAK01704.1"/>
    <property type="molecule type" value="Genomic_DNA"/>
</dbReference>
<dbReference type="EMBL" id="BX936398">
    <property type="protein sequence ID" value="CAH21526.1"/>
    <property type="molecule type" value="Genomic_DNA"/>
</dbReference>
<dbReference type="RefSeq" id="WP_002210955.1">
    <property type="nucleotide sequence ID" value="NZ_CP009712.1"/>
</dbReference>
<dbReference type="SMR" id="P69989"/>
<dbReference type="KEGG" id="ypo:BZ17_172"/>
<dbReference type="KEGG" id="yps:YPTB2288"/>
<dbReference type="PATRIC" id="fig|273123.14.peg.179"/>
<dbReference type="Proteomes" id="UP000001011">
    <property type="component" value="Chromosome"/>
</dbReference>
<dbReference type="GO" id="GO:0003677">
    <property type="term" value="F:DNA binding"/>
    <property type="evidence" value="ECO:0007669"/>
    <property type="project" value="UniProtKB-UniRule"/>
</dbReference>
<dbReference type="GO" id="GO:0003700">
    <property type="term" value="F:DNA-binding transcription factor activity"/>
    <property type="evidence" value="ECO:0007669"/>
    <property type="project" value="UniProtKB-UniRule"/>
</dbReference>
<dbReference type="GO" id="GO:0006950">
    <property type="term" value="P:response to stress"/>
    <property type="evidence" value="ECO:0007669"/>
    <property type="project" value="TreeGrafter"/>
</dbReference>
<dbReference type="FunFam" id="1.10.10.10:FF:000261">
    <property type="entry name" value="Transcriptional regulator SlyA"/>
    <property type="match status" value="1"/>
</dbReference>
<dbReference type="Gene3D" id="1.10.10.10">
    <property type="entry name" value="Winged helix-like DNA-binding domain superfamily/Winged helix DNA-binding domain"/>
    <property type="match status" value="1"/>
</dbReference>
<dbReference type="HAMAP" id="MF_01819">
    <property type="entry name" value="HTH_type_SlyA"/>
    <property type="match status" value="1"/>
</dbReference>
<dbReference type="InterPro" id="IPR000835">
    <property type="entry name" value="HTH_MarR-typ"/>
</dbReference>
<dbReference type="InterPro" id="IPR039422">
    <property type="entry name" value="MarR/SlyA-like"/>
</dbReference>
<dbReference type="InterPro" id="IPR023187">
    <property type="entry name" value="Tscrpt_reg_MarR-type_CS"/>
</dbReference>
<dbReference type="InterPro" id="IPR023071">
    <property type="entry name" value="Tscrpt_reg_SlyA"/>
</dbReference>
<dbReference type="InterPro" id="IPR036388">
    <property type="entry name" value="WH-like_DNA-bd_sf"/>
</dbReference>
<dbReference type="InterPro" id="IPR036390">
    <property type="entry name" value="WH_DNA-bd_sf"/>
</dbReference>
<dbReference type="NCBIfam" id="NF002926">
    <property type="entry name" value="PRK03573.1"/>
    <property type="match status" value="1"/>
</dbReference>
<dbReference type="PANTHER" id="PTHR33164:SF64">
    <property type="entry name" value="TRANSCRIPTIONAL REGULATOR SLYA"/>
    <property type="match status" value="1"/>
</dbReference>
<dbReference type="PANTHER" id="PTHR33164">
    <property type="entry name" value="TRANSCRIPTIONAL REGULATOR, MARR FAMILY"/>
    <property type="match status" value="1"/>
</dbReference>
<dbReference type="Pfam" id="PF01047">
    <property type="entry name" value="MarR"/>
    <property type="match status" value="1"/>
</dbReference>
<dbReference type="PRINTS" id="PR00598">
    <property type="entry name" value="HTHMARR"/>
</dbReference>
<dbReference type="SMART" id="SM00347">
    <property type="entry name" value="HTH_MARR"/>
    <property type="match status" value="1"/>
</dbReference>
<dbReference type="SUPFAM" id="SSF46785">
    <property type="entry name" value="Winged helix' DNA-binding domain"/>
    <property type="match status" value="1"/>
</dbReference>
<dbReference type="PROSITE" id="PS01117">
    <property type="entry name" value="HTH_MARR_1"/>
    <property type="match status" value="1"/>
</dbReference>
<dbReference type="PROSITE" id="PS50995">
    <property type="entry name" value="HTH_MARR_2"/>
    <property type="match status" value="1"/>
</dbReference>
<evidence type="ECO:0000255" key="1">
    <source>
        <dbReference type="HAMAP-Rule" id="MF_01819"/>
    </source>
</evidence>
<evidence type="ECO:0000269" key="2">
    <source>
    </source>
</evidence>
<proteinExistence type="evidence at transcript level"/>
<protein>
    <recommendedName>
        <fullName evidence="1">Transcriptional regulator SlyA</fullName>
    </recommendedName>
    <alternativeName>
        <fullName>Regulator of virulence protein A</fullName>
    </alternativeName>
    <alternativeName>
        <fullName>Transcriptional regulator for cryptic hemolysin</fullName>
    </alternativeName>
</protein>
<accession>P69989</accession>
<accession>Q66A44</accession>
<accession>Q9AM39</accession>